<comment type="catalytic activity">
    <reaction>
        <text>D-arabinose 5-phosphate + phosphoenolpyruvate + H2O = 3-deoxy-alpha-D-manno-2-octulosonate-8-phosphate + phosphate</text>
        <dbReference type="Rhea" id="RHEA:14053"/>
        <dbReference type="ChEBI" id="CHEBI:15377"/>
        <dbReference type="ChEBI" id="CHEBI:43474"/>
        <dbReference type="ChEBI" id="CHEBI:57693"/>
        <dbReference type="ChEBI" id="CHEBI:58702"/>
        <dbReference type="ChEBI" id="CHEBI:85985"/>
        <dbReference type="EC" id="2.5.1.55"/>
    </reaction>
</comment>
<comment type="pathway">
    <text>Carbohydrate biosynthesis; 3-deoxy-D-manno-octulosonate biosynthesis; 3-deoxy-D-manno-octulosonate from D-ribulose 5-phosphate: step 2/3.</text>
</comment>
<comment type="pathway">
    <text>Bacterial outer membrane biogenesis; lipopolysaccharide biosynthesis.</text>
</comment>
<comment type="subunit">
    <text>Oligomer.</text>
</comment>
<comment type="subcellular location">
    <subcellularLocation>
        <location evidence="1">Cytoplasm</location>
    </subcellularLocation>
</comment>
<comment type="similarity">
    <text evidence="2">Belongs to the KdsA family.</text>
</comment>
<dbReference type="EC" id="2.5.1.55"/>
<dbReference type="EMBL" id="AE000657">
    <property type="protein sequence ID" value="AAC06457.1"/>
    <property type="molecule type" value="Genomic_DNA"/>
</dbReference>
<dbReference type="PIR" id="E70308">
    <property type="entry name" value="E70308"/>
</dbReference>
<dbReference type="RefSeq" id="NP_213056.1">
    <property type="nucleotide sequence ID" value="NC_000918.1"/>
</dbReference>
<dbReference type="RefSeq" id="WP_010879994.1">
    <property type="nucleotide sequence ID" value="NC_000918.1"/>
</dbReference>
<dbReference type="PDB" id="1FWN">
    <property type="method" value="X-ray"/>
    <property type="resolution" value="1.94 A"/>
    <property type="chains" value="A/B=1-267"/>
</dbReference>
<dbReference type="PDB" id="1FWS">
    <property type="method" value="X-ray"/>
    <property type="resolution" value="1.90 A"/>
    <property type="chains" value="A/B=1-267"/>
</dbReference>
<dbReference type="PDB" id="1FWT">
    <property type="method" value="X-ray"/>
    <property type="resolution" value="1.90 A"/>
    <property type="chains" value="A/B=1-267"/>
</dbReference>
<dbReference type="PDB" id="1FWW">
    <property type="method" value="X-ray"/>
    <property type="resolution" value="1.85 A"/>
    <property type="chains" value="A/B=1-267"/>
</dbReference>
<dbReference type="PDB" id="1FX6">
    <property type="method" value="X-ray"/>
    <property type="resolution" value="2.06 A"/>
    <property type="chains" value="A/B=1-267"/>
</dbReference>
<dbReference type="PDB" id="1FXP">
    <property type="method" value="X-ray"/>
    <property type="resolution" value="1.80 A"/>
    <property type="chains" value="A/B=1-267"/>
</dbReference>
<dbReference type="PDB" id="1FXQ">
    <property type="method" value="X-ray"/>
    <property type="resolution" value="1.80 A"/>
    <property type="chains" value="A/B=1-267"/>
</dbReference>
<dbReference type="PDB" id="1FY6">
    <property type="method" value="X-ray"/>
    <property type="resolution" value="1.89 A"/>
    <property type="chains" value="A/B=1-267"/>
</dbReference>
<dbReference type="PDB" id="1JCX">
    <property type="method" value="X-ray"/>
    <property type="resolution" value="1.80 A"/>
    <property type="chains" value="A/B=1-267"/>
</dbReference>
<dbReference type="PDB" id="1JCY">
    <property type="method" value="X-ray"/>
    <property type="resolution" value="1.90 A"/>
    <property type="chains" value="A/B=1-267"/>
</dbReference>
<dbReference type="PDB" id="1LRN">
    <property type="method" value="X-ray"/>
    <property type="resolution" value="2.10 A"/>
    <property type="chains" value="A/B=1-267"/>
</dbReference>
<dbReference type="PDB" id="1LRO">
    <property type="method" value="X-ray"/>
    <property type="resolution" value="1.80 A"/>
    <property type="chains" value="A/B=1-267"/>
</dbReference>
<dbReference type="PDB" id="1LRQ">
    <property type="method" value="X-ray"/>
    <property type="resolution" value="1.80 A"/>
    <property type="chains" value="A/B=1-267"/>
</dbReference>
<dbReference type="PDB" id="1PCK">
    <property type="method" value="X-ray"/>
    <property type="resolution" value="1.80 A"/>
    <property type="chains" value="A/B=1-267"/>
</dbReference>
<dbReference type="PDB" id="1PCW">
    <property type="method" value="X-ray"/>
    <property type="resolution" value="1.85 A"/>
    <property type="chains" value="A/B=1-267"/>
</dbReference>
<dbReference type="PDB" id="1PE1">
    <property type="method" value="X-ray"/>
    <property type="resolution" value="1.74 A"/>
    <property type="chains" value="A/B=1-267"/>
</dbReference>
<dbReference type="PDB" id="1T8X">
    <property type="method" value="X-ray"/>
    <property type="resolution" value="1.80 A"/>
    <property type="chains" value="A/B=1-267"/>
</dbReference>
<dbReference type="PDB" id="1T96">
    <property type="method" value="X-ray"/>
    <property type="resolution" value="1.85 A"/>
    <property type="chains" value="A/B=1-267"/>
</dbReference>
<dbReference type="PDB" id="1T99">
    <property type="method" value="X-ray"/>
    <property type="resolution" value="1.85 A"/>
    <property type="chains" value="A/B=1-267"/>
</dbReference>
<dbReference type="PDB" id="1ZHA">
    <property type="method" value="X-ray"/>
    <property type="resolution" value="1.74 A"/>
    <property type="chains" value="A/B=1-267"/>
</dbReference>
<dbReference type="PDB" id="1ZJI">
    <property type="method" value="X-ray"/>
    <property type="resolution" value="2.25 A"/>
    <property type="chains" value="A/B=1-267"/>
</dbReference>
<dbReference type="PDB" id="2A21">
    <property type="method" value="X-ray"/>
    <property type="resolution" value="1.80 A"/>
    <property type="chains" value="A/B=1-267"/>
</dbReference>
<dbReference type="PDB" id="2A2I">
    <property type="method" value="X-ray"/>
    <property type="resolution" value="1.95 A"/>
    <property type="chains" value="A/B=1-267"/>
</dbReference>
<dbReference type="PDB" id="2EF9">
    <property type="method" value="X-ray"/>
    <property type="resolution" value="2.00 A"/>
    <property type="chains" value="A/B=1-267"/>
</dbReference>
<dbReference type="PDB" id="2NWR">
    <property type="method" value="X-ray"/>
    <property type="resolution" value="1.50 A"/>
    <property type="chains" value="A/B=1-267"/>
</dbReference>
<dbReference type="PDB" id="2NWS">
    <property type="method" value="X-ray"/>
    <property type="resolution" value="1.80 A"/>
    <property type="chains" value="A/B=1-267"/>
</dbReference>
<dbReference type="PDB" id="2NX1">
    <property type="method" value="X-ray"/>
    <property type="resolution" value="1.80 A"/>
    <property type="chains" value="A/B=1-267"/>
</dbReference>
<dbReference type="PDB" id="2NX3">
    <property type="method" value="X-ray"/>
    <property type="resolution" value="2.10 A"/>
    <property type="chains" value="A/B/C/D/E/F/G/H/I/J/K/L=1-267"/>
</dbReference>
<dbReference type="PDB" id="2NXG">
    <property type="method" value="X-ray"/>
    <property type="resolution" value="1.95 A"/>
    <property type="chains" value="A/B=2-264"/>
</dbReference>
<dbReference type="PDB" id="2NXH">
    <property type="method" value="X-ray"/>
    <property type="resolution" value="2.11 A"/>
    <property type="chains" value="A/B/C/D/E/F/G/H/I/J/K/L=2-264"/>
</dbReference>
<dbReference type="PDB" id="2NXI">
    <property type="method" value="X-ray"/>
    <property type="resolution" value="2.30 A"/>
    <property type="chains" value="A/B/C/D/E/F/G/H/I/J/K/L=2-264"/>
</dbReference>
<dbReference type="PDB" id="3E0I">
    <property type="method" value="X-ray"/>
    <property type="resolution" value="1.70 A"/>
    <property type="chains" value="A/B=1-267"/>
</dbReference>
<dbReference type="PDB" id="3E12">
    <property type="method" value="X-ray"/>
    <property type="resolution" value="1.70 A"/>
    <property type="chains" value="A/B=1-267"/>
</dbReference>
<dbReference type="PDBsum" id="1FWN"/>
<dbReference type="PDBsum" id="1FWS"/>
<dbReference type="PDBsum" id="1FWT"/>
<dbReference type="PDBsum" id="1FWW"/>
<dbReference type="PDBsum" id="1FX6"/>
<dbReference type="PDBsum" id="1FXP"/>
<dbReference type="PDBsum" id="1FXQ"/>
<dbReference type="PDBsum" id="1FY6"/>
<dbReference type="PDBsum" id="1JCX"/>
<dbReference type="PDBsum" id="1JCY"/>
<dbReference type="PDBsum" id="1LRN"/>
<dbReference type="PDBsum" id="1LRO"/>
<dbReference type="PDBsum" id="1LRQ"/>
<dbReference type="PDBsum" id="1PCK"/>
<dbReference type="PDBsum" id="1PCW"/>
<dbReference type="PDBsum" id="1PE1"/>
<dbReference type="PDBsum" id="1T8X"/>
<dbReference type="PDBsum" id="1T96"/>
<dbReference type="PDBsum" id="1T99"/>
<dbReference type="PDBsum" id="1ZHA"/>
<dbReference type="PDBsum" id="1ZJI"/>
<dbReference type="PDBsum" id="2A21"/>
<dbReference type="PDBsum" id="2A2I"/>
<dbReference type="PDBsum" id="2EF9"/>
<dbReference type="PDBsum" id="2NWR"/>
<dbReference type="PDBsum" id="2NWS"/>
<dbReference type="PDBsum" id="2NX1"/>
<dbReference type="PDBsum" id="2NX3"/>
<dbReference type="PDBsum" id="2NXG"/>
<dbReference type="PDBsum" id="2NXH"/>
<dbReference type="PDBsum" id="2NXI"/>
<dbReference type="PDBsum" id="3E0I"/>
<dbReference type="PDBsum" id="3E12"/>
<dbReference type="SMR" id="O66496"/>
<dbReference type="FunCoup" id="O66496">
    <property type="interactions" value="348"/>
</dbReference>
<dbReference type="STRING" id="224324.aq_085"/>
<dbReference type="DrugBank" id="DB02992">
    <property type="generic name" value="1-Deoxy-6-O-Phosphono-1-[(Phosphonomethyl)Amino]-L-Threo-Hexitol"/>
</dbReference>
<dbReference type="DrugBank" id="DB03248">
    <property type="generic name" value="2-(Phosphonooxy)Butanoic Acid"/>
</dbReference>
<dbReference type="DrugBank" id="DB01709">
    <property type="generic name" value="2-phospho-D-glyceric acid"/>
</dbReference>
<dbReference type="DrugBank" id="DB03745">
    <property type="generic name" value="Arabinose-5-phosphate"/>
</dbReference>
<dbReference type="DrugBank" id="DB03937">
    <property type="generic name" value="D-erythrose 4-phosphate"/>
</dbReference>
<dbReference type="DrugBank" id="DB01819">
    <property type="generic name" value="Phosphoenolpyruvate"/>
</dbReference>
<dbReference type="DrugBank" id="DB02053">
    <property type="generic name" value="Ribose-5-phosphate"/>
</dbReference>
<dbReference type="DrugBank" id="DB02433">
    <property type="generic name" value="{[(2,2-Dihydroxy-Ethyl)-(2,3,4,5-Tetrahydroxy-6-Phosphonooxy-Hexyl)-Amino]-Methyl}-Phosphonic Acid"/>
</dbReference>
<dbReference type="EnsemblBacteria" id="AAC06457">
    <property type="protein sequence ID" value="AAC06457"/>
    <property type="gene ID" value="aq_085"/>
</dbReference>
<dbReference type="KEGG" id="aae:aq_085"/>
<dbReference type="PATRIC" id="fig|224324.8.peg.75"/>
<dbReference type="eggNOG" id="COG2877">
    <property type="taxonomic scope" value="Bacteria"/>
</dbReference>
<dbReference type="HOGENOM" id="CLU_036666_0_0_0"/>
<dbReference type="InParanoid" id="O66496"/>
<dbReference type="OrthoDB" id="9780456at2"/>
<dbReference type="BRENDA" id="2.5.1.55">
    <property type="organism ID" value="396"/>
</dbReference>
<dbReference type="UniPathway" id="UPA00030"/>
<dbReference type="UniPathway" id="UPA00357">
    <property type="reaction ID" value="UER00474"/>
</dbReference>
<dbReference type="EvolutionaryTrace" id="O66496"/>
<dbReference type="Proteomes" id="UP000000798">
    <property type="component" value="Chromosome"/>
</dbReference>
<dbReference type="GO" id="GO:0005829">
    <property type="term" value="C:cytosol"/>
    <property type="evidence" value="ECO:0000318"/>
    <property type="project" value="GO_Central"/>
</dbReference>
<dbReference type="GO" id="GO:0008676">
    <property type="term" value="F:3-deoxy-8-phosphooctulonate synthase activity"/>
    <property type="evidence" value="ECO:0000318"/>
    <property type="project" value="GO_Central"/>
</dbReference>
<dbReference type="GO" id="GO:0019294">
    <property type="term" value="P:keto-3-deoxy-D-manno-octulosonic acid biosynthetic process"/>
    <property type="evidence" value="ECO:0007669"/>
    <property type="project" value="UniProtKB-UniRule"/>
</dbReference>
<dbReference type="GO" id="GO:0046364">
    <property type="term" value="P:monosaccharide biosynthetic process"/>
    <property type="evidence" value="ECO:0000318"/>
    <property type="project" value="GO_Central"/>
</dbReference>
<dbReference type="Gene3D" id="3.20.20.70">
    <property type="entry name" value="Aldolase class I"/>
    <property type="match status" value="1"/>
</dbReference>
<dbReference type="HAMAP" id="MF_00056">
    <property type="entry name" value="KDO8P_synth"/>
    <property type="match status" value="1"/>
</dbReference>
<dbReference type="InterPro" id="IPR013785">
    <property type="entry name" value="Aldolase_TIM"/>
</dbReference>
<dbReference type="InterPro" id="IPR006218">
    <property type="entry name" value="DAHP1/KDSA"/>
</dbReference>
<dbReference type="InterPro" id="IPR006269">
    <property type="entry name" value="KDO8P_synthase"/>
</dbReference>
<dbReference type="NCBIfam" id="TIGR01362">
    <property type="entry name" value="KDO8P_synth"/>
    <property type="match status" value="1"/>
</dbReference>
<dbReference type="NCBIfam" id="NF003543">
    <property type="entry name" value="PRK05198.1"/>
    <property type="match status" value="1"/>
</dbReference>
<dbReference type="PANTHER" id="PTHR21057">
    <property type="entry name" value="PHOSPHO-2-DEHYDRO-3-DEOXYHEPTONATE ALDOLASE"/>
    <property type="match status" value="1"/>
</dbReference>
<dbReference type="Pfam" id="PF00793">
    <property type="entry name" value="DAHP_synth_1"/>
    <property type="match status" value="1"/>
</dbReference>
<dbReference type="SUPFAM" id="SSF51569">
    <property type="entry name" value="Aldolase"/>
    <property type="match status" value="1"/>
</dbReference>
<feature type="chain" id="PRO_0000187099" description="2-dehydro-3-deoxyphosphooctonate aldolase">
    <location>
        <begin position="1"/>
        <end position="267"/>
    </location>
</feature>
<feature type="strand" evidence="4">
    <location>
        <begin position="4"/>
        <end position="9"/>
    </location>
</feature>
<feature type="helix" evidence="4">
    <location>
        <begin position="16"/>
        <end position="32"/>
    </location>
</feature>
<feature type="strand" evidence="4">
    <location>
        <begin position="36"/>
        <end position="41"/>
    </location>
</feature>
<feature type="helix" evidence="4">
    <location>
        <begin position="60"/>
        <end position="74"/>
    </location>
</feature>
<feature type="strand" evidence="4">
    <location>
        <begin position="77"/>
        <end position="81"/>
    </location>
</feature>
<feature type="helix" evidence="4">
    <location>
        <begin position="85"/>
        <end position="87"/>
    </location>
</feature>
<feature type="helix" evidence="4">
    <location>
        <begin position="88"/>
        <end position="92"/>
    </location>
</feature>
<feature type="strand" evidence="4">
    <location>
        <begin position="96"/>
        <end position="100"/>
    </location>
</feature>
<feature type="helix" evidence="4">
    <location>
        <begin position="102"/>
        <end position="104"/>
    </location>
</feature>
<feature type="helix" evidence="4">
    <location>
        <begin position="108"/>
        <end position="115"/>
    </location>
</feature>
<feature type="turn" evidence="4">
    <location>
        <begin position="116"/>
        <end position="118"/>
    </location>
</feature>
<feature type="strand" evidence="4">
    <location>
        <begin position="119"/>
        <end position="124"/>
    </location>
</feature>
<feature type="helix" evidence="4">
    <location>
        <begin position="131"/>
        <end position="134"/>
    </location>
</feature>
<feature type="helix" evidence="4">
    <location>
        <begin position="135"/>
        <end position="143"/>
    </location>
</feature>
<feature type="strand" evidence="4">
    <location>
        <begin position="147"/>
        <end position="153"/>
    </location>
</feature>
<feature type="strand" evidence="4">
    <location>
        <begin position="159"/>
        <end position="161"/>
    </location>
</feature>
<feature type="helix" evidence="4">
    <location>
        <begin position="169"/>
        <end position="173"/>
    </location>
</feature>
<feature type="turn" evidence="4">
    <location>
        <begin position="174"/>
        <end position="176"/>
    </location>
</feature>
<feature type="strand" evidence="4">
    <location>
        <begin position="177"/>
        <end position="182"/>
    </location>
</feature>
<feature type="helix" evidence="4">
    <location>
        <begin position="185"/>
        <end position="187"/>
    </location>
</feature>
<feature type="turn" evidence="5">
    <location>
        <begin position="190"/>
        <end position="193"/>
    </location>
</feature>
<feature type="strand" evidence="5">
    <location>
        <begin position="194"/>
        <end position="196"/>
    </location>
</feature>
<feature type="helix" evidence="4">
    <location>
        <begin position="201"/>
        <end position="203"/>
    </location>
</feature>
<feature type="helix" evidence="4">
    <location>
        <begin position="204"/>
        <end position="214"/>
    </location>
</feature>
<feature type="strand" evidence="4">
    <location>
        <begin position="217"/>
        <end position="225"/>
    </location>
</feature>
<feature type="helix" evidence="4">
    <location>
        <begin position="227"/>
        <end position="229"/>
    </location>
</feature>
<feature type="strand" evidence="6">
    <location>
        <begin position="231"/>
        <end position="233"/>
    </location>
</feature>
<feature type="turn" evidence="4">
    <location>
        <begin position="234"/>
        <end position="236"/>
    </location>
</feature>
<feature type="strand" evidence="3">
    <location>
        <begin position="237"/>
        <end position="239"/>
    </location>
</feature>
<feature type="helix" evidence="4">
    <location>
        <begin position="240"/>
        <end position="242"/>
    </location>
</feature>
<feature type="helix" evidence="4">
    <location>
        <begin position="243"/>
        <end position="258"/>
    </location>
</feature>
<proteinExistence type="evidence at protein level"/>
<name>KDSA_AQUAE</name>
<protein>
    <recommendedName>
        <fullName>2-dehydro-3-deoxyphosphooctonate aldolase</fullName>
        <ecNumber>2.5.1.55</ecNumber>
    </recommendedName>
    <alternativeName>
        <fullName>3-deoxy-D-manno-octulosonic acid 8-phosphate synthase</fullName>
    </alternativeName>
    <alternativeName>
        <fullName>KDO-8-phosphate synthase</fullName>
        <shortName>KDO 8-P synthase</shortName>
        <shortName>KDOPS</shortName>
    </alternativeName>
    <alternativeName>
        <fullName>Phospho-2-dehydro-3-deoxyoctonate aldolase</fullName>
    </alternativeName>
</protein>
<reference key="1">
    <citation type="journal article" date="1998" name="Nature">
        <title>The complete genome of the hyperthermophilic bacterium Aquifex aeolicus.</title>
        <authorList>
            <person name="Deckert G."/>
            <person name="Warren P.V."/>
            <person name="Gaasterland T."/>
            <person name="Young W.G."/>
            <person name="Lenox A.L."/>
            <person name="Graham D.E."/>
            <person name="Overbeek R."/>
            <person name="Snead M.A."/>
            <person name="Keller M."/>
            <person name="Aujay M."/>
            <person name="Huber R."/>
            <person name="Feldman R.A."/>
            <person name="Short J.M."/>
            <person name="Olsen G.J."/>
            <person name="Swanson R.V."/>
        </authorList>
    </citation>
    <scope>NUCLEOTIDE SEQUENCE [LARGE SCALE GENOMIC DNA]</scope>
    <source>
        <strain>VF5</strain>
    </source>
</reference>
<reference key="2">
    <citation type="journal article" date="1999" name="Biochem. Biophys. Res. Commun.">
        <title>Functional and biochemical characterization of a recombinant 3-deoxy-D-manno-octulosonic acid 8-phosphate synthase from the hyperthermophilic bacterium Aquifex aeolicus.</title>
        <authorList>
            <person name="Duewel H.S."/>
            <person name="Sheflyan G.Y."/>
            <person name="Woodard R.W."/>
        </authorList>
    </citation>
    <scope>CHARACTERIZATION</scope>
</reference>
<reference key="3">
    <citation type="journal article" date="2002" name="J. Mol. Biol.">
        <title>Function of His185 in Aquifex aeolicus 3-deoxy-D-manno-octulosonate 8-phosphate synthase.</title>
        <authorList>
            <person name="Wang J."/>
            <person name="Duewel H.S."/>
            <person name="Stuckey J.A."/>
            <person name="Woodard R.W."/>
            <person name="Gatti D.L."/>
        </authorList>
    </citation>
    <scope>X-RAY CRYSTALLOGRAPHY (1.8 ANGSTROMS)</scope>
</reference>
<gene>
    <name type="primary">kdsA</name>
    <name type="ordered locus">aq_085</name>
</gene>
<organism>
    <name type="scientific">Aquifex aeolicus (strain VF5)</name>
    <dbReference type="NCBI Taxonomy" id="224324"/>
    <lineage>
        <taxon>Bacteria</taxon>
        <taxon>Pseudomonadati</taxon>
        <taxon>Aquificota</taxon>
        <taxon>Aquificia</taxon>
        <taxon>Aquificales</taxon>
        <taxon>Aquificaceae</taxon>
        <taxon>Aquifex</taxon>
    </lineage>
</organism>
<keyword id="KW-0002">3D-structure</keyword>
<keyword id="KW-0963">Cytoplasm</keyword>
<keyword id="KW-0448">Lipopolysaccharide biosynthesis</keyword>
<keyword id="KW-1185">Reference proteome</keyword>
<keyword id="KW-0808">Transferase</keyword>
<sequence length="267" mass="29734">MEKFLVIAGPCAIESEELLLKVGEEIKRLSEKFKEVEFVFKSSFDKANRSSIHSFRGHGLEYGVKALRKVKEEFGLKITTDIHESWQAEPVAEVADIIQIPAFLCRQTDLLLAAAKTGRAVNVKKGQFLAPWDTKNVVEKLKFGGAKEIYLTERGTTFGYNNLVVDFRSLPIMKQWAKVIYDATHSVQLPGGLGDKSGGMREFIFPLIRAAVAVGCDGVFMETHPEPEKALSDASTQLPLSQLEGIIEAILEIREVASKYYETIPVK</sequence>
<evidence type="ECO:0000250" key="1"/>
<evidence type="ECO:0000305" key="2"/>
<evidence type="ECO:0007829" key="3">
    <source>
        <dbReference type="PDB" id="1PE1"/>
    </source>
</evidence>
<evidence type="ECO:0007829" key="4">
    <source>
        <dbReference type="PDB" id="2NWR"/>
    </source>
</evidence>
<evidence type="ECO:0007829" key="5">
    <source>
        <dbReference type="PDB" id="3E0I"/>
    </source>
</evidence>
<evidence type="ECO:0007829" key="6">
    <source>
        <dbReference type="PDB" id="3E12"/>
    </source>
</evidence>
<accession>O66496</accession>